<reference key="1">
    <citation type="journal article" date="1988" name="J. Mol. Biol.">
        <title>Structure and evolution of the bovine prothrombin gene.</title>
        <authorList>
            <person name="Irwin D.M."/>
            <person name="Robertson K.A."/>
            <person name="Macgillivray R.T.A."/>
        </authorList>
    </citation>
    <scope>NUCLEOTIDE SEQUENCE [MRNA]</scope>
</reference>
<reference key="2">
    <citation type="journal article" date="1984" name="Biochemistry">
        <title>Characterization of bovine prothrombin mRNA and its translation product.</title>
        <authorList>
            <person name="McGillivray R.T.A."/>
            <person name="Davie E.W."/>
        </authorList>
    </citation>
    <scope>NUCLEOTIDE SEQUENCE [MRNA]</scope>
</reference>
<reference key="3">
    <citation type="submission" date="2005-09" db="EMBL/GenBank/DDBJ databases">
        <authorList>
            <consortium name="NIH - Mammalian Gene Collection (MGC) project"/>
        </authorList>
    </citation>
    <scope>NUCLEOTIDE SEQUENCE [LARGE SCALE MRNA]</scope>
    <source>
        <strain>Hereford</strain>
        <tissue>Fetal liver</tissue>
    </source>
</reference>
<reference key="4">
    <citation type="book" date="1975" name="Boerhaave symposium on prothrombin and related coagulation factors">
        <editorList>
            <person name="Hemker H.C."/>
            <person name="Veltkamp J.J."/>
        </editorList>
        <authorList>
            <person name="Magnusson S."/>
            <person name="Sottrup-Jensen L."/>
            <person name="Petersen T.E."/>
            <person name="Claeys H."/>
        </authorList>
    </citation>
    <scope>PROTEIN SEQUENCE OF 44-625</scope>
    <scope>DISULFIDE BONDS</scope>
    <scope>GAMMA-CARBOXYGLUTAMATION AT GLU-50; GLU-51; GLU-58; GLU-60; GLU-63; GLU-64; GLU-69; GLU-70; GLU-73 AND GLU-76</scope>
    <scope>GLYCOSYLATION AT ASN-120; ASN-144 AND ASN-419</scope>
</reference>
<reference key="5">
    <citation type="journal article" date="1985" name="Biochemistry">
        <title>Characterization of the bovine prothrombin gene.</title>
        <authorList>
            <person name="Irwin D.M."/>
            <person name="Ahern K.G."/>
            <person name="Pearson G.D."/>
            <person name="McGillivray R.T.A."/>
        </authorList>
    </citation>
    <scope>GENE STRUCTURE</scope>
</reference>
<reference key="6">
    <citation type="journal article" date="1986" name="Biochemistry">
        <title>Three-dimensional structure of the kringle sequence: structure of prothrombin fragment 1.</title>
        <authorList>
            <person name="Park C.H."/>
            <person name="Tulinsky A."/>
        </authorList>
    </citation>
    <scope>X-RAY CRYSTALLOGRAPHY (2.8 ANGSTROMS) OF ACTIVATION PEPTIDE 1</scope>
</reference>
<reference key="7">
    <citation type="journal article" date="1991" name="J. Mol. Biol.">
        <title>Structure of bovine prothrombin fragment 1 refined at 2.25-A resolution.</title>
        <authorList>
            <person name="Seshadri T.-P."/>
            <person name="Tulinsky A."/>
            <person name="Skrzypczak-Jankun E."/>
            <person name="Park C.H."/>
        </authorList>
    </citation>
    <scope>X-RAY CRYSTALLOGRAPHY (2.25 ANGSTROMS) OF ACTIVATION PEPTIDE 1</scope>
</reference>
<reference key="8">
    <citation type="journal article" date="1992" name="Biochemistry">
        <title>The Ca2+ ion and membrane binding structure of the Gla domain of Ca-prothrombin fragment 1.</title>
        <authorList>
            <person name="Soriano-Garcia M."/>
            <person name="Padmanabhan K."/>
            <person name="de Vos A.M."/>
            <person name="Tulinsky A."/>
        </authorList>
    </citation>
    <scope>X-RAY CRYSTALLOGRAPHY (2.2 ANGSTROMS) OF ACTIVATION PEPTIDE 1 IN COMPLEX WITH CALCIUM IONS</scope>
    <scope>DISULFIDE BONDS</scope>
    <scope>GLYCOSYLATION AT ASN-120 AND ASN-144</scope>
</reference>
<reference key="9">
    <citation type="journal article" date="1992" name="J. Biol. Chem.">
        <title>The structure of residues 7-16 of the A alpha-chain of human fibrinogen bound to bovine thrombin at 2.3-A resolution.</title>
        <authorList>
            <person name="Martin P.D."/>
            <person name="Robertson W."/>
            <person name="Turk D."/>
            <person name="Huber R."/>
            <person name="Bode W."/>
            <person name="Edwards B.F.P."/>
        </authorList>
    </citation>
    <scope>X-RAY CRYSTALLOGRAPHY (2.3 ANGSTROMS) IN COMPLEX WITH FIBRINOGEN</scope>
</reference>
<reference key="10">
    <citation type="journal article" date="1992" name="J. Biol. Chem.">
        <title>The structure of a complex of bovine alpha-thrombin and recombinant hirudin at 2.8-A resolution.</title>
        <authorList>
            <person name="Vitali J."/>
            <person name="Martin P.D."/>
            <person name="Malkowski M.G."/>
            <person name="Robertson W.D."/>
            <person name="Lazar J.B."/>
            <person name="Winant R.C."/>
            <person name="Johnson P.H."/>
            <person name="Edwards B.F.P."/>
        </authorList>
    </citation>
    <scope>X-RAY CRYSTALLOGRAPHY (2.8 ANGSTROMS) OF 318-625 IN COMPLEX WITH HIRUDIN</scope>
</reference>
<reference key="11">
    <citation type="journal article" date="1992" name="J. Mol. Biol.">
        <title>Refined 2.3 A X-ray crystal structure of bovine thrombin complexes formed with the benzamidine and arginine-based thrombin inhibitors NAPAP, 4-TAPAP and MQPA. A starting point for improving antithrombotics.</title>
        <authorList>
            <person name="Brandstetter H."/>
            <person name="Turk D."/>
            <person name="Hoeffken H.W."/>
            <person name="Grosse D."/>
            <person name="Stuerzebecher J."/>
            <person name="Martin P.D."/>
            <person name="Edwards B.F.P."/>
            <person name="Bode W."/>
        </authorList>
    </citation>
    <scope>X-RAY CRYSTALLOGRAPHY (2.3 ANGSTROMS)</scope>
</reference>
<reference key="12">
    <citation type="journal article" date="1996" name="EMBO J.">
        <title>The ornithodorin-thrombin crystal structure, a key to the TAP enigma?</title>
        <authorList>
            <person name="van de Locht A."/>
            <person name="Stubbs M.T."/>
            <person name="Bode W."/>
            <person name="Friedrich T."/>
            <person name="Bollschweiler C."/>
            <person name="Hoffken W."/>
            <person name="Huber R."/>
        </authorList>
    </citation>
    <scope>X-RAY CRYSTALLOGRAPHY (3.1 ANGSTROMS) OF COMPLEX WITH ORNITHODORIN</scope>
</reference>
<reference key="13">
    <citation type="journal article" date="1997" name="Proc. Natl. Acad. Sci. U.S.A.">
        <title>Structure of the thrombin complex with triabin, a lipocalin-like exosite-binding inhibitor derived from a triatomine bug.</title>
        <authorList>
            <person name="Fuentes-Prior P."/>
            <person name="Noeske-Jungblut C."/>
            <person name="Donner P."/>
            <person name="Schleuning W.-D."/>
            <person name="Huber R."/>
            <person name="Bode W."/>
        </authorList>
    </citation>
    <scope>X-RAY CRYSTALLOGRAPHY (2.6 ANGSTROMS) OF COMPLEX WITH TRIABIN</scope>
</reference>
<reference key="14">
    <citation type="journal article" date="2003" name="Nat. Struct. Biol.">
        <title>Structural basis of membrane binding by Gla domains of vitamin K-dependent proteins.</title>
        <authorList>
            <person name="Huang M."/>
            <person name="Rigby A.C."/>
            <person name="Morelli X."/>
            <person name="Grant M.A."/>
            <person name="Huang G."/>
            <person name="Furie B."/>
            <person name="Seaton B."/>
            <person name="Furie B.C."/>
        </authorList>
    </citation>
    <scope>X-RAY CRYSTALLOGRAPHY (1.9 ANGSTROMS) OF 44-190 IN COMPLEX WITH CALCIUM AND LYSOPHOSPHATIDYLSERINE</scope>
</reference>
<name>THRB_BOVIN</name>
<dbReference type="EC" id="3.4.21.5"/>
<dbReference type="EMBL" id="V00135">
    <property type="protein sequence ID" value="CAA23451.1"/>
    <property type="molecule type" value="mRNA"/>
</dbReference>
<dbReference type="EMBL" id="J00041">
    <property type="protein sequence ID" value="AAA30781.1"/>
    <property type="molecule type" value="mRNA"/>
</dbReference>
<dbReference type="EMBL" id="BC105201">
    <property type="protein sequence ID" value="AAI05202.1"/>
    <property type="molecule type" value="mRNA"/>
</dbReference>
<dbReference type="PIR" id="S02537">
    <property type="entry name" value="TBBO"/>
</dbReference>
<dbReference type="RefSeq" id="NP_776302.1">
    <property type="nucleotide sequence ID" value="NM_173877.1"/>
</dbReference>
<dbReference type="RefSeq" id="XP_015330343.1">
    <property type="nucleotide sequence ID" value="XM_015474857.1"/>
</dbReference>
<dbReference type="PDB" id="1A0H">
    <property type="method" value="X-ray"/>
    <property type="resolution" value="3.20 A"/>
    <property type="chains" value="A/D=208-366, B/E=367-625"/>
</dbReference>
<dbReference type="PDB" id="1AVG">
    <property type="method" value="X-ray"/>
    <property type="resolution" value="2.60 A"/>
    <property type="chains" value="H=367-625, L=326-366"/>
</dbReference>
<dbReference type="PDB" id="1BBR">
    <property type="method" value="X-ray"/>
    <property type="resolution" value="2.30 A"/>
    <property type="chains" value="E=517-625, H=367-515, J/L/M=318-366, K/N=367-625"/>
</dbReference>
<dbReference type="PDB" id="1ETR">
    <property type="method" value="X-ray"/>
    <property type="resolution" value="2.20 A"/>
    <property type="chains" value="H=367-625, L=318-366"/>
</dbReference>
<dbReference type="PDB" id="1ETS">
    <property type="method" value="X-ray"/>
    <property type="resolution" value="2.30 A"/>
    <property type="chains" value="H=367-625, L=318-366"/>
</dbReference>
<dbReference type="PDB" id="1ETT">
    <property type="method" value="X-ray"/>
    <property type="resolution" value="2.50 A"/>
    <property type="chains" value="H=367-625, L=318-366"/>
</dbReference>
<dbReference type="PDB" id="1HRT">
    <property type="method" value="X-ray"/>
    <property type="resolution" value="2.80 A"/>
    <property type="chains" value="H=367-625, L=318-366"/>
</dbReference>
<dbReference type="PDB" id="1ID5">
    <property type="method" value="X-ray"/>
    <property type="resolution" value="2.50 A"/>
    <property type="chains" value="H=367-622, L=318-366"/>
</dbReference>
<dbReference type="PDB" id="1MKW">
    <property type="method" value="X-ray"/>
    <property type="resolution" value="2.30 A"/>
    <property type="chains" value="H=367-625, K=318-625, L=318-366"/>
</dbReference>
<dbReference type="PDB" id="1MKX">
    <property type="method" value="X-ray"/>
    <property type="resolution" value="2.20 A"/>
    <property type="chains" value="H=367-625, K=318-625, L=318-366"/>
</dbReference>
<dbReference type="PDB" id="1NL1">
    <property type="method" value="X-ray"/>
    <property type="resolution" value="1.90 A"/>
    <property type="chains" value="A=44-190"/>
</dbReference>
<dbReference type="PDB" id="1NL2">
    <property type="method" value="X-ray"/>
    <property type="resolution" value="2.30 A"/>
    <property type="chains" value="A=44-189"/>
</dbReference>
<dbReference type="PDB" id="1TBQ">
    <property type="method" value="X-ray"/>
    <property type="resolution" value="3.10 A"/>
    <property type="chains" value="H/K=367-625, J/L=318-366"/>
</dbReference>
<dbReference type="PDB" id="1TBR">
    <property type="method" value="X-ray"/>
    <property type="resolution" value="2.60 A"/>
    <property type="chains" value="H/K=367-625, J/L=318-366"/>
</dbReference>
<dbReference type="PDB" id="1TOC">
    <property type="method" value="X-ray"/>
    <property type="resolution" value="3.10 A"/>
    <property type="chains" value="A/C/E/G=318-366, B/D/F/H=367-625"/>
</dbReference>
<dbReference type="PDB" id="1UCY">
    <property type="method" value="X-ray"/>
    <property type="resolution" value="2.20 A"/>
    <property type="chains" value="E=517-625, H=367-516, J/L/M=318-366, K/N=367-625"/>
</dbReference>
<dbReference type="PDB" id="1UVT">
    <property type="method" value="X-ray"/>
    <property type="resolution" value="2.50 A"/>
    <property type="chains" value="H=367-625, L=318-366"/>
</dbReference>
<dbReference type="PDB" id="1UVU">
    <property type="method" value="X-ray"/>
    <property type="resolution" value="2.80 A"/>
    <property type="chains" value="H=367-625, L=318-366"/>
</dbReference>
<dbReference type="PDB" id="1VIT">
    <property type="method" value="X-ray"/>
    <property type="resolution" value="3.20 A"/>
    <property type="chains" value="F=367-516, G=517-625, H=367-625, L/M=318-366"/>
</dbReference>
<dbReference type="PDB" id="1YCP">
    <property type="method" value="X-ray"/>
    <property type="resolution" value="2.50 A"/>
    <property type="chains" value="H=367-625, J/L=318-366, K=367-516, M=517-625"/>
</dbReference>
<dbReference type="PDB" id="2A1D">
    <property type="method" value="X-ray"/>
    <property type="resolution" value="3.50 A"/>
    <property type="chains" value="A/E=326-366, B/F=367-625"/>
</dbReference>
<dbReference type="PDB" id="2HPP">
    <property type="method" value="X-ray"/>
    <property type="resolution" value="3.30 A"/>
    <property type="chains" value="P=214-292"/>
</dbReference>
<dbReference type="PDB" id="2ODY">
    <property type="method" value="X-ray"/>
    <property type="resolution" value="2.35 A"/>
    <property type="chains" value="A/C=318-366, B/D=367-625"/>
</dbReference>
<dbReference type="PDB" id="2PF1">
    <property type="method" value="X-ray"/>
    <property type="resolution" value="2.80 A"/>
    <property type="chains" value="A=44-199"/>
</dbReference>
<dbReference type="PDB" id="2PF2">
    <property type="method" value="X-ray"/>
    <property type="resolution" value="2.20 A"/>
    <property type="chains" value="A=44-199"/>
</dbReference>
<dbReference type="PDB" id="2SPT">
    <property type="method" value="X-ray"/>
    <property type="resolution" value="2.50 A"/>
    <property type="chains" value="A=44-188"/>
</dbReference>
<dbReference type="PDB" id="3PMA">
    <property type="method" value="X-ray"/>
    <property type="resolution" value="2.20 A"/>
    <property type="chains" value="A/C=336-364, B/D=367-625"/>
</dbReference>
<dbReference type="PDB" id="3PMB">
    <property type="method" value="X-ray"/>
    <property type="resolution" value="2.90 A"/>
    <property type="chains" value="A/C=336-364, B/D=367-625"/>
</dbReference>
<dbReference type="PDBsum" id="1A0H"/>
<dbReference type="PDBsum" id="1AVG"/>
<dbReference type="PDBsum" id="1BBR"/>
<dbReference type="PDBsum" id="1ETR"/>
<dbReference type="PDBsum" id="1ETS"/>
<dbReference type="PDBsum" id="1ETT"/>
<dbReference type="PDBsum" id="1HRT"/>
<dbReference type="PDBsum" id="1ID5"/>
<dbReference type="PDBsum" id="1MKW"/>
<dbReference type="PDBsum" id="1MKX"/>
<dbReference type="PDBsum" id="1NL1"/>
<dbReference type="PDBsum" id="1NL2"/>
<dbReference type="PDBsum" id="1TBQ"/>
<dbReference type="PDBsum" id="1TBR"/>
<dbReference type="PDBsum" id="1TOC"/>
<dbReference type="PDBsum" id="1UCY"/>
<dbReference type="PDBsum" id="1UVT"/>
<dbReference type="PDBsum" id="1UVU"/>
<dbReference type="PDBsum" id="1VIT"/>
<dbReference type="PDBsum" id="1YCP"/>
<dbReference type="PDBsum" id="2A1D"/>
<dbReference type="PDBsum" id="2HPP"/>
<dbReference type="PDBsum" id="2ODY"/>
<dbReference type="PDBsum" id="2PF1"/>
<dbReference type="PDBsum" id="2PF2"/>
<dbReference type="PDBsum" id="2SPT"/>
<dbReference type="PDBsum" id="3PMA"/>
<dbReference type="PDBsum" id="3PMB"/>
<dbReference type="SMR" id="P00735"/>
<dbReference type="DIP" id="DIP-6099N"/>
<dbReference type="FunCoup" id="P00735">
    <property type="interactions" value="323"/>
</dbReference>
<dbReference type="IntAct" id="P00735">
    <property type="interactions" value="2"/>
</dbReference>
<dbReference type="STRING" id="9913.ENSBTAP00000009406"/>
<dbReference type="BindingDB" id="P00735"/>
<dbReference type="ChEMBL" id="CHEMBL4471"/>
<dbReference type="DrugCentral" id="P00735"/>
<dbReference type="Allergome" id="1245">
    <property type="allergen name" value="Bos d Thrombin"/>
</dbReference>
<dbReference type="MEROPS" id="S01.217"/>
<dbReference type="GlyConnect" id="517">
    <property type="glycosylation" value="3 N-Linked glycans"/>
</dbReference>
<dbReference type="GlyCosmos" id="P00735">
    <property type="glycosylation" value="3 sites, 6 glycans"/>
</dbReference>
<dbReference type="GlyGen" id="P00735">
    <property type="glycosylation" value="4 sites, 6 N-linked glycans (1 site)"/>
</dbReference>
<dbReference type="iPTMnet" id="P00735"/>
<dbReference type="PaxDb" id="9913-ENSBTAP00000009406"/>
<dbReference type="PeptideAtlas" id="P00735"/>
<dbReference type="GeneID" id="280685"/>
<dbReference type="KEGG" id="bta:280685"/>
<dbReference type="CTD" id="2147"/>
<dbReference type="eggNOG" id="ENOG502QTSX">
    <property type="taxonomic scope" value="Eukaryota"/>
</dbReference>
<dbReference type="HOGENOM" id="CLU_006842_19_4_1"/>
<dbReference type="InParanoid" id="P00735"/>
<dbReference type="OrthoDB" id="6380398at2759"/>
<dbReference type="TreeFam" id="TF327329"/>
<dbReference type="BRENDA" id="3.4.21.5">
    <property type="organism ID" value="908"/>
</dbReference>
<dbReference type="SABIO-RK" id="P00735"/>
<dbReference type="EvolutionaryTrace" id="P00735"/>
<dbReference type="PRO" id="PR:P00735"/>
<dbReference type="Proteomes" id="UP000009136">
    <property type="component" value="Unplaced"/>
</dbReference>
<dbReference type="GO" id="GO:0062023">
    <property type="term" value="C:collagen-containing extracellular matrix"/>
    <property type="evidence" value="ECO:0000318"/>
    <property type="project" value="GO_Central"/>
</dbReference>
<dbReference type="GO" id="GO:0005615">
    <property type="term" value="C:extracellular space"/>
    <property type="evidence" value="ECO:0000318"/>
    <property type="project" value="GO_Central"/>
</dbReference>
<dbReference type="GO" id="GO:0005509">
    <property type="term" value="F:calcium ion binding"/>
    <property type="evidence" value="ECO:0007669"/>
    <property type="project" value="InterPro"/>
</dbReference>
<dbReference type="GO" id="GO:0070051">
    <property type="term" value="F:fibrinogen binding"/>
    <property type="evidence" value="ECO:0000353"/>
    <property type="project" value="BHF-UCL"/>
</dbReference>
<dbReference type="GO" id="GO:0004252">
    <property type="term" value="F:serine-type endopeptidase activity"/>
    <property type="evidence" value="ECO:0000314"/>
    <property type="project" value="BHF-UCL"/>
</dbReference>
<dbReference type="GO" id="GO:0006953">
    <property type="term" value="P:acute-phase response"/>
    <property type="evidence" value="ECO:0007669"/>
    <property type="project" value="UniProtKB-KW"/>
</dbReference>
<dbReference type="GO" id="GO:0030168">
    <property type="term" value="P:platelet activation"/>
    <property type="evidence" value="ECO:0000318"/>
    <property type="project" value="GO_Central"/>
</dbReference>
<dbReference type="GO" id="GO:0030194">
    <property type="term" value="P:positive regulation of blood coagulation"/>
    <property type="evidence" value="ECO:0000314"/>
    <property type="project" value="BHF-UCL"/>
</dbReference>
<dbReference type="GO" id="GO:0051258">
    <property type="term" value="P:protein polymerization"/>
    <property type="evidence" value="ECO:0000314"/>
    <property type="project" value="BHF-UCL"/>
</dbReference>
<dbReference type="GO" id="GO:0006508">
    <property type="term" value="P:proteolysis"/>
    <property type="evidence" value="ECO:0000314"/>
    <property type="project" value="BHF-UCL"/>
</dbReference>
<dbReference type="CDD" id="cd00108">
    <property type="entry name" value="KR"/>
    <property type="match status" value="2"/>
</dbReference>
<dbReference type="CDD" id="cd00190">
    <property type="entry name" value="Tryp_SPc"/>
    <property type="match status" value="1"/>
</dbReference>
<dbReference type="FunFam" id="2.40.10.10:FF:000085">
    <property type="entry name" value="Prothrombin"/>
    <property type="match status" value="1"/>
</dbReference>
<dbReference type="FunFam" id="2.40.20.10:FF:000015">
    <property type="entry name" value="Prothrombin"/>
    <property type="match status" value="1"/>
</dbReference>
<dbReference type="FunFam" id="2.40.20.10:FF:000017">
    <property type="entry name" value="Prothrombin"/>
    <property type="match status" value="1"/>
</dbReference>
<dbReference type="FunFam" id="4.10.140.10:FF:000001">
    <property type="entry name" value="Prothrombin"/>
    <property type="match status" value="1"/>
</dbReference>
<dbReference type="Gene3D" id="2.40.20.10">
    <property type="entry name" value="Plasminogen Kringle 4"/>
    <property type="match status" value="2"/>
</dbReference>
<dbReference type="Gene3D" id="4.10.140.10">
    <property type="entry name" value="Thrombin light chain domain"/>
    <property type="match status" value="1"/>
</dbReference>
<dbReference type="Gene3D" id="2.40.10.10">
    <property type="entry name" value="Trypsin-like serine proteases"/>
    <property type="match status" value="2"/>
</dbReference>
<dbReference type="InterPro" id="IPR035972">
    <property type="entry name" value="GLA-like_dom_SF"/>
</dbReference>
<dbReference type="InterPro" id="IPR000294">
    <property type="entry name" value="GLA_domain"/>
</dbReference>
<dbReference type="InterPro" id="IPR000001">
    <property type="entry name" value="Kringle"/>
</dbReference>
<dbReference type="InterPro" id="IPR013806">
    <property type="entry name" value="Kringle-like"/>
</dbReference>
<dbReference type="InterPro" id="IPR018056">
    <property type="entry name" value="Kringle_CS"/>
</dbReference>
<dbReference type="InterPro" id="IPR038178">
    <property type="entry name" value="Kringle_sf"/>
</dbReference>
<dbReference type="InterPro" id="IPR009003">
    <property type="entry name" value="Peptidase_S1_PA"/>
</dbReference>
<dbReference type="InterPro" id="IPR043504">
    <property type="entry name" value="Peptidase_S1_PA_chymotrypsin"/>
</dbReference>
<dbReference type="InterPro" id="IPR001314">
    <property type="entry name" value="Peptidase_S1A"/>
</dbReference>
<dbReference type="InterPro" id="IPR003966">
    <property type="entry name" value="Prothrombin/thrombin"/>
</dbReference>
<dbReference type="InterPro" id="IPR051659">
    <property type="entry name" value="Serine_Protease_S1-Domain"/>
</dbReference>
<dbReference type="InterPro" id="IPR018992">
    <property type="entry name" value="Thrombin_light_chain"/>
</dbReference>
<dbReference type="InterPro" id="IPR037111">
    <property type="entry name" value="Thrombin_light_chain_sf"/>
</dbReference>
<dbReference type="InterPro" id="IPR001254">
    <property type="entry name" value="Trypsin_dom"/>
</dbReference>
<dbReference type="InterPro" id="IPR018114">
    <property type="entry name" value="TRYPSIN_HIS"/>
</dbReference>
<dbReference type="InterPro" id="IPR033116">
    <property type="entry name" value="TRYPSIN_SER"/>
</dbReference>
<dbReference type="PANTHER" id="PTHR24254">
    <property type="entry name" value="PROTHROMBIN"/>
    <property type="match status" value="1"/>
</dbReference>
<dbReference type="PANTHER" id="PTHR24254:SF10">
    <property type="entry name" value="PROTHROMBIN"/>
    <property type="match status" value="1"/>
</dbReference>
<dbReference type="Pfam" id="PF00594">
    <property type="entry name" value="Gla"/>
    <property type="match status" value="1"/>
</dbReference>
<dbReference type="Pfam" id="PF00051">
    <property type="entry name" value="Kringle"/>
    <property type="match status" value="2"/>
</dbReference>
<dbReference type="Pfam" id="PF09396">
    <property type="entry name" value="Thrombin_light"/>
    <property type="match status" value="1"/>
</dbReference>
<dbReference type="Pfam" id="PF00089">
    <property type="entry name" value="Trypsin"/>
    <property type="match status" value="1"/>
</dbReference>
<dbReference type="PIRSF" id="PIRSF001149">
    <property type="entry name" value="Thrombin"/>
    <property type="match status" value="1"/>
</dbReference>
<dbReference type="PRINTS" id="PR00722">
    <property type="entry name" value="CHYMOTRYPSIN"/>
</dbReference>
<dbReference type="PRINTS" id="PR00001">
    <property type="entry name" value="GLABLOOD"/>
</dbReference>
<dbReference type="PRINTS" id="PR00018">
    <property type="entry name" value="KRINGLE"/>
</dbReference>
<dbReference type="PRINTS" id="PR01505">
    <property type="entry name" value="PROTHROMBIN"/>
</dbReference>
<dbReference type="SMART" id="SM00069">
    <property type="entry name" value="GLA"/>
    <property type="match status" value="1"/>
</dbReference>
<dbReference type="SMART" id="SM00130">
    <property type="entry name" value="KR"/>
    <property type="match status" value="2"/>
</dbReference>
<dbReference type="SMART" id="SM00020">
    <property type="entry name" value="Tryp_SPc"/>
    <property type="match status" value="1"/>
</dbReference>
<dbReference type="SUPFAM" id="SSF57630">
    <property type="entry name" value="GLA-domain"/>
    <property type="match status" value="1"/>
</dbReference>
<dbReference type="SUPFAM" id="SSF57440">
    <property type="entry name" value="Kringle-like"/>
    <property type="match status" value="2"/>
</dbReference>
<dbReference type="SUPFAM" id="SSF50494">
    <property type="entry name" value="Trypsin-like serine proteases"/>
    <property type="match status" value="1"/>
</dbReference>
<dbReference type="PROSITE" id="PS00011">
    <property type="entry name" value="GLA_1"/>
    <property type="match status" value="1"/>
</dbReference>
<dbReference type="PROSITE" id="PS50998">
    <property type="entry name" value="GLA_2"/>
    <property type="match status" value="1"/>
</dbReference>
<dbReference type="PROSITE" id="PS00021">
    <property type="entry name" value="KRINGLE_1"/>
    <property type="match status" value="2"/>
</dbReference>
<dbReference type="PROSITE" id="PS50070">
    <property type="entry name" value="KRINGLE_2"/>
    <property type="match status" value="2"/>
</dbReference>
<dbReference type="PROSITE" id="PS50240">
    <property type="entry name" value="TRYPSIN_DOM"/>
    <property type="match status" value="1"/>
</dbReference>
<dbReference type="PROSITE" id="PS00134">
    <property type="entry name" value="TRYPSIN_HIS"/>
    <property type="match status" value="1"/>
</dbReference>
<dbReference type="PROSITE" id="PS00135">
    <property type="entry name" value="TRYPSIN_SER"/>
    <property type="match status" value="1"/>
</dbReference>
<sequence>MARVRGPRLPGCLALAALFSLVHSQHVFLAHQQASSLLQRARRANKGFLEEVRKGNLERECLEEPCSREEAFEALESLSATDAFWAKYTACESARNPREKLNECLEGNCAEGVGMNYRGNVSVTRSGIECQLWRSRYPHKPEINSTTHPGADLRENFCRNPDGSITGPWCYTTSPTLRREECSVPVCGQDRVTVEVIPRSGGSTTSQSPLLETCVPDRGREYRGRLAVTTSGSRCLAWSSEQAKALSKDQDFNPAVPLAENFCRNPDGDEEGAWCYVADQPGDFEYCDLNYCEEPVDGDLGDRLGEDPDPDAAIEGRTSEDHFQPFFNEKTFGAGEADCGLRPLFEKKQVQDQTEKELFESYIEGRIVEGQDAEVGLSPWQVMLFRKSPQELLCGASLISDRWVLTAAHCLLYPPWDKNFTVDDLLVRIGKHSRTRYERKVEKISMLDKIYIHPRYNWKENLDRDIALLKLKRPIELSDYIHPVCLPDKQTAAKLLHAGFKGRVTGWGNRRETWTTSVAEVQPSVLQVVNLPLVERPVCKASTRIRITDNMFCAGYKPGEGKRGDACEGDSGGPFVMKSPYNNRWYQMGIVSWGEGCDRDGKYGFYTHVFRLKKWIQKVIDRLGS</sequence>
<accession>P00735</accession>
<accession>Q3MHK7</accession>
<proteinExistence type="evidence at protein level"/>
<comment type="function">
    <text evidence="1 2">Thrombin, which cleaves bonds after Arg and Lys, converts fibrinogen to fibrin and activates factors V, VII, VIII, XIII, and, in complex with thrombomodulin, protein C. Functions in blood homeostasis, inflammation and wound healing (By similarity). Activates coagulation factor XI (F11); activation is promoted by the contact with negatively charged surfaces (By similarity). Triggers the production of pro-inflammatory cytokines, such as MCP-1/CCL2 and IL8/CXCL8, in endothelial cells (By similarity).</text>
</comment>
<comment type="catalytic activity">
    <reaction>
        <text>Selective cleavage of Arg-|-Gly bonds in fibrinogen to form fibrin and release fibrinopeptides A and B.</text>
        <dbReference type="EC" id="3.4.21.5"/>
    </reaction>
</comment>
<comment type="activity regulation">
    <text evidence="2">Activity is promoted in the presence of negatively charged surfaces, such as polyphosphate and dextran sulfate (By similarity). Inhibited by SERPINA5 (By similarity).</text>
</comment>
<comment type="subunit">
    <text evidence="2">Heterodimer (named alpha-thrombin) of a light and a heavy chain; disulfide-linked. Forms a heterodimer with SERPINA5. In plasma, interacts (via N-terminus) with alpha-1-microglobulin; this interaction does not prevent the activation of prothrombin to thrombin.</text>
</comment>
<comment type="interaction">
    <interactant intactId="EBI-990806">
        <id>P00735</id>
    </interactant>
    <interactant intactId="EBI-990838">
        <id>Q4W8J9</id>
        <label>coa</label>
    </interactant>
    <organismsDiffer>true</organismsDiffer>
    <experiments>2</experiments>
</comment>
<comment type="subcellular location">
    <subcellularLocation>
        <location>Secreted</location>
        <location>Extracellular space</location>
    </subcellularLocation>
</comment>
<comment type="tissue specificity">
    <text>Expressed by the liver and secreted in plasma.</text>
</comment>
<comment type="PTM">
    <text evidence="8">The gamma-carboxyglutamyl residues, which bind calcium ions, result from the carboxylation of glutamyl residues by a microsomal enzyme, the vitamin K-dependent carboxylase. The modified residues are necessary for the calcium-dependent interaction with a negatively charged phospholipid surface, which is essential for the conversion of prothrombin to thrombin.</text>
</comment>
<comment type="PTM">
    <text evidence="2">In the penultimate step of the coagulation cascade, prothrombin is converted to thrombin by the prothrombinase complex composed of factor Xa (F10), cofactor Va (F5), and phospholipids. This activation requires factor Xa-catalyzed sequential cleavage at 2 sites, Arg-317 and Arg-366, along 2 possible pathways. In the first pathway, the first cleavage occurs at Arg-317, leading to the formation of the inactive intermediate prethrombin-2. This pathway preferentially occurs on platelets and in the absence of cofactor Va. In the second pathway, the first cleavage occurs at Arg-366, which separates protease domain into 2 chains that remain connected through a disulfide bond and generates the active intermediate meizothrombin. The presence of cofactor Va directs activation along the meizothrombin pathway and greatly accelerates the rate of cleavage at Arg-366, but has a smaller effect on the cleavage of meizothrombin at Arg-317. Meizothrombin accumulates as an intermediate when prothrombinase is assembled on the membrane of red blood cells.</text>
</comment>
<comment type="miscellaneous">
    <text>Thrombin can itself cleave the N-terminal fragment (fragment 1) of the prothrombin, prior to its activation by factor Xa.</text>
</comment>
<comment type="similarity">
    <text evidence="5">Belongs to the peptidase S1 family.</text>
</comment>
<gene>
    <name type="primary">F2</name>
</gene>
<organism>
    <name type="scientific">Bos taurus</name>
    <name type="common">Bovine</name>
    <dbReference type="NCBI Taxonomy" id="9913"/>
    <lineage>
        <taxon>Eukaryota</taxon>
        <taxon>Metazoa</taxon>
        <taxon>Chordata</taxon>
        <taxon>Craniata</taxon>
        <taxon>Vertebrata</taxon>
        <taxon>Euteleostomi</taxon>
        <taxon>Mammalia</taxon>
        <taxon>Eutheria</taxon>
        <taxon>Laurasiatheria</taxon>
        <taxon>Artiodactyla</taxon>
        <taxon>Ruminantia</taxon>
        <taxon>Pecora</taxon>
        <taxon>Bovidae</taxon>
        <taxon>Bovinae</taxon>
        <taxon>Bos</taxon>
    </lineage>
</organism>
<protein>
    <recommendedName>
        <fullName>Prothrombin</fullName>
        <ecNumber>3.4.21.5</ecNumber>
    </recommendedName>
    <alternativeName>
        <fullName>Coagulation factor II</fullName>
    </alternativeName>
    <component>
        <recommendedName>
            <fullName>Activation peptide fragment 1</fullName>
        </recommendedName>
    </component>
    <component>
        <recommendedName>
            <fullName>Activation peptide fragment 2</fullName>
        </recommendedName>
    </component>
    <component>
        <recommendedName>
            <fullName>Thrombin light chain</fullName>
        </recommendedName>
    </component>
    <component>
        <recommendedName>
            <fullName>Thrombin heavy chain</fullName>
        </recommendedName>
    </component>
</protein>
<feature type="signal peptide" evidence="3">
    <location>
        <begin position="1"/>
        <end position="24"/>
    </location>
</feature>
<feature type="propeptide" id="PRO_0000028153" evidence="8">
    <location>
        <begin position="25"/>
        <end position="43"/>
    </location>
</feature>
<feature type="chain" id="PRO_0000028154" description="Prothrombin">
    <location>
        <begin position="44"/>
        <end position="625"/>
    </location>
</feature>
<feature type="peptide" id="PRO_0000028155" description="Activation peptide fragment 1">
    <location>
        <begin position="44"/>
        <end position="199"/>
    </location>
</feature>
<feature type="peptide" id="PRO_0000028156" description="Activation peptide fragment 2">
    <location>
        <begin position="200"/>
        <end position="317"/>
    </location>
</feature>
<feature type="chain" id="PRO_0000028157" description="Thrombin light chain">
    <location>
        <begin position="318"/>
        <end position="366"/>
    </location>
</feature>
<feature type="chain" id="PRO_0000028158" description="Thrombin heavy chain">
    <location>
        <begin position="367"/>
        <end position="625"/>
    </location>
</feature>
<feature type="domain" description="Gla" evidence="6">
    <location>
        <begin position="44"/>
        <end position="90"/>
    </location>
</feature>
<feature type="domain" description="Kringle 1" evidence="4">
    <location>
        <begin position="109"/>
        <end position="187"/>
    </location>
</feature>
<feature type="domain" description="Kringle 2" evidence="4">
    <location>
        <begin position="214"/>
        <end position="292"/>
    </location>
</feature>
<feature type="domain" description="Peptidase S1" evidence="5">
    <location>
        <begin position="367"/>
        <end position="621"/>
    </location>
</feature>
<feature type="region of interest" description="High affinity receptor-binding region which is also known as the TP508 peptide" evidence="1">
    <location>
        <begin position="554"/>
        <end position="576"/>
    </location>
</feature>
<feature type="active site" description="Charge relay system">
    <location>
        <position position="409"/>
    </location>
</feature>
<feature type="active site" description="Charge relay system">
    <location>
        <position position="465"/>
    </location>
</feature>
<feature type="active site" description="Charge relay system">
    <location>
        <position position="571"/>
    </location>
</feature>
<feature type="site" description="Cleavage; by thrombin">
    <location>
        <begin position="199"/>
        <end position="200"/>
    </location>
</feature>
<feature type="site" description="Cleavage; by factor Xa" evidence="2">
    <location>
        <begin position="317"/>
        <end position="318"/>
    </location>
</feature>
<feature type="site" description="Cleavage; by factor Xa" evidence="2">
    <location>
        <begin position="366"/>
        <end position="367"/>
    </location>
</feature>
<feature type="modified residue" description="4-carboxyglutamate" evidence="6 8">
    <location>
        <position position="50"/>
    </location>
</feature>
<feature type="modified residue" description="4-carboxyglutamate" evidence="6 8">
    <location>
        <position position="51"/>
    </location>
</feature>
<feature type="modified residue" description="4-carboxyglutamate" evidence="6 8">
    <location>
        <position position="58"/>
    </location>
</feature>
<feature type="modified residue" description="4-carboxyglutamate" evidence="6 8">
    <location>
        <position position="60"/>
    </location>
</feature>
<feature type="modified residue" description="4-carboxyglutamate" evidence="6 8">
    <location>
        <position position="63"/>
    </location>
</feature>
<feature type="modified residue" description="4-carboxyglutamate" evidence="6 8">
    <location>
        <position position="64"/>
    </location>
</feature>
<feature type="modified residue" description="4-carboxyglutamate" evidence="6 8">
    <location>
        <position position="69"/>
    </location>
</feature>
<feature type="modified residue" description="4-carboxyglutamate" evidence="6 8">
    <location>
        <position position="70"/>
    </location>
</feature>
<feature type="modified residue" description="4-carboxyglutamate" evidence="6 8">
    <location>
        <position position="73"/>
    </location>
</feature>
<feature type="modified residue" description="4-carboxyglutamate" evidence="6 8">
    <location>
        <position position="76"/>
    </location>
</feature>
<feature type="glycosylation site" description="N-linked (GlcNAc...) asparagine" evidence="7 8">
    <location>
        <position position="120"/>
    </location>
</feature>
<feature type="glycosylation site" description="N-linked (GlcNAc...) asparagine" evidence="7 8">
    <location>
        <position position="144"/>
    </location>
</feature>
<feature type="glycosylation site" description="N-linked (GlcNAc...) asparagine" evidence="8">
    <location>
        <position position="419"/>
    </location>
</feature>
<feature type="disulfide bond">
    <location>
        <begin position="61"/>
        <end position="66"/>
    </location>
</feature>
<feature type="disulfide bond">
    <location>
        <begin position="91"/>
        <end position="104"/>
    </location>
</feature>
<feature type="disulfide bond">
    <location>
        <begin position="109"/>
        <end position="187"/>
    </location>
</feature>
<feature type="disulfide bond">
    <location>
        <begin position="130"/>
        <end position="170"/>
    </location>
</feature>
<feature type="disulfide bond">
    <location>
        <begin position="158"/>
        <end position="182"/>
    </location>
</feature>
<feature type="disulfide bond">
    <location>
        <begin position="214"/>
        <end position="292"/>
    </location>
</feature>
<feature type="disulfide bond">
    <location>
        <begin position="235"/>
        <end position="275"/>
    </location>
</feature>
<feature type="disulfide bond">
    <location>
        <begin position="263"/>
        <end position="287"/>
    </location>
</feature>
<feature type="disulfide bond" description="Interchain (between light and heavy chains)">
    <location>
        <begin position="339"/>
        <end position="485"/>
    </location>
</feature>
<feature type="disulfide bond">
    <location>
        <begin position="394"/>
        <end position="410"/>
    </location>
</feature>
<feature type="disulfide bond">
    <location>
        <begin position="539"/>
        <end position="553"/>
    </location>
</feature>
<feature type="disulfide bond">
    <location>
        <begin position="567"/>
        <end position="597"/>
    </location>
</feature>
<feature type="sequence variant">
    <original>D</original>
    <variation>N</variation>
    <location>
        <position position="600"/>
    </location>
</feature>
<feature type="sequence conflict" description="In Ref. 2; AAA30781." evidence="9" ref="2">
    <original>S</original>
    <variation>H</variation>
    <location>
        <position position="231"/>
    </location>
</feature>
<feature type="sequence conflict" description="In Ref. 2; AAA30781." evidence="9" ref="2">
    <original>D</original>
    <variation>H</variation>
    <location>
        <position position="249"/>
    </location>
</feature>
<feature type="sequence conflict" description="In Ref. 4; AA sequence." evidence="9" ref="4">
    <original>D</original>
    <variation>N</variation>
    <location>
        <position position="288"/>
    </location>
</feature>
<feature type="sequence conflict" description="In Ref. 4; AA sequence." evidence="9" ref="4">
    <original>Q</original>
    <variation>E</variation>
    <location>
        <position position="353"/>
    </location>
</feature>
<feature type="sequence conflict" description="In Ref. 4; AA sequence." evidence="9" ref="4">
    <original>E</original>
    <variation>Q</variation>
    <location>
        <position position="355"/>
    </location>
</feature>
<feature type="sequence conflict" description="In Ref. 3; AAI05202." evidence="9" ref="3">
    <original>L</original>
    <variation>P</variation>
    <location>
        <position position="358"/>
    </location>
</feature>
<feature type="sequence conflict" description="In Ref. 4; AA sequence." evidence="9" ref="4">
    <original>DN</original>
    <variation>ND</variation>
    <location>
        <begin position="549"/>
        <end position="550"/>
    </location>
</feature>
<feature type="strand" evidence="14">
    <location>
        <begin position="47"/>
        <end position="49"/>
    </location>
</feature>
<feature type="helix" evidence="14">
    <location>
        <begin position="50"/>
        <end position="52"/>
    </location>
</feature>
<feature type="helix" evidence="14">
    <location>
        <begin position="57"/>
        <end position="61"/>
    </location>
</feature>
<feature type="helix" evidence="14">
    <location>
        <begin position="68"/>
        <end position="74"/>
    </location>
</feature>
<feature type="helix" evidence="14">
    <location>
        <begin position="78"/>
        <end position="90"/>
    </location>
</feature>
<feature type="turn" evidence="14">
    <location>
        <begin position="91"/>
        <end position="93"/>
    </location>
</feature>
<feature type="helix" evidence="14">
    <location>
        <begin position="98"/>
        <end position="106"/>
    </location>
</feature>
<feature type="strand" evidence="14">
    <location>
        <begin position="108"/>
        <end position="110"/>
    </location>
</feature>
<feature type="turn" evidence="20">
    <location>
        <begin position="112"/>
        <end position="114"/>
    </location>
</feature>
<feature type="strand" evidence="20">
    <location>
        <begin position="125"/>
        <end position="127"/>
    </location>
</feature>
<feature type="strand" evidence="14">
    <location>
        <begin position="137"/>
        <end position="139"/>
    </location>
</feature>
<feature type="turn" evidence="14">
    <location>
        <begin position="145"/>
        <end position="147"/>
    </location>
</feature>
<feature type="strand" evidence="19">
    <location>
        <begin position="149"/>
        <end position="151"/>
    </location>
</feature>
<feature type="strand" evidence="14">
    <location>
        <begin position="168"/>
        <end position="174"/>
    </location>
</feature>
<feature type="strand" evidence="14">
    <location>
        <begin position="179"/>
        <end position="181"/>
    </location>
</feature>
<feature type="strand" evidence="19">
    <location>
        <begin position="185"/>
        <end position="189"/>
    </location>
</feature>
<feature type="strand" evidence="19">
    <location>
        <begin position="192"/>
        <end position="194"/>
    </location>
</feature>
<feature type="helix" evidence="10">
    <location>
        <begin position="217"/>
        <end position="219"/>
    </location>
</feature>
<feature type="strand" evidence="10">
    <location>
        <begin position="238"/>
        <end position="240"/>
    </location>
</feature>
<feature type="helix" evidence="10">
    <location>
        <begin position="243"/>
        <end position="246"/>
    </location>
</feature>
<feature type="strand" evidence="17">
    <location>
        <begin position="248"/>
        <end position="250"/>
    </location>
</feature>
<feature type="strand" evidence="17">
    <location>
        <begin position="254"/>
        <end position="256"/>
    </location>
</feature>
<feature type="strand" evidence="10">
    <location>
        <begin position="274"/>
        <end position="276"/>
    </location>
</feature>
<feature type="strand" evidence="10">
    <location>
        <begin position="278"/>
        <end position="280"/>
    </location>
</feature>
<feature type="strand" evidence="10">
    <location>
        <begin position="284"/>
        <end position="286"/>
    </location>
</feature>
<feature type="strand" evidence="10">
    <location>
        <begin position="291"/>
        <end position="293"/>
    </location>
</feature>
<feature type="strand" evidence="10">
    <location>
        <begin position="310"/>
        <end position="313"/>
    </location>
</feature>
<feature type="strand" evidence="10">
    <location>
        <begin position="321"/>
        <end position="323"/>
    </location>
</feature>
<feature type="helix" evidence="18">
    <location>
        <begin position="329"/>
        <end position="332"/>
    </location>
</feature>
<feature type="turn" evidence="11">
    <location>
        <begin position="337"/>
        <end position="340"/>
    </location>
</feature>
<feature type="turn" evidence="11">
    <location>
        <begin position="343"/>
        <end position="345"/>
    </location>
</feature>
<feature type="helix" evidence="11">
    <location>
        <begin position="346"/>
        <end position="348"/>
    </location>
</feature>
<feature type="helix" evidence="11">
    <location>
        <begin position="355"/>
        <end position="362"/>
    </location>
</feature>
<feature type="strand" evidence="13">
    <location>
        <begin position="370"/>
        <end position="372"/>
    </location>
</feature>
<feature type="strand" evidence="16">
    <location>
        <begin position="375"/>
        <end position="377"/>
    </location>
</feature>
<feature type="strand" evidence="11">
    <location>
        <begin position="381"/>
        <end position="386"/>
    </location>
</feature>
<feature type="turn" evidence="11">
    <location>
        <begin position="387"/>
        <end position="390"/>
    </location>
</feature>
<feature type="strand" evidence="11">
    <location>
        <begin position="391"/>
        <end position="400"/>
    </location>
</feature>
<feature type="strand" evidence="11">
    <location>
        <begin position="403"/>
        <end position="406"/>
    </location>
</feature>
<feature type="helix" evidence="11">
    <location>
        <begin position="408"/>
        <end position="410"/>
    </location>
</feature>
<feature type="helix" evidence="11">
    <location>
        <begin position="414"/>
        <end position="416"/>
    </location>
</feature>
<feature type="strand" evidence="11">
    <location>
        <begin position="424"/>
        <end position="430"/>
    </location>
</feature>
<feature type="strand" evidence="11">
    <location>
        <begin position="433"/>
        <end position="436"/>
    </location>
</feature>
<feature type="turn" evidence="11">
    <location>
        <begin position="439"/>
        <end position="441"/>
    </location>
</feature>
<feature type="strand" evidence="11">
    <location>
        <begin position="443"/>
        <end position="445"/>
    </location>
</feature>
<feature type="strand" evidence="11">
    <location>
        <begin position="447"/>
        <end position="452"/>
    </location>
</feature>
<feature type="turn" evidence="11">
    <location>
        <begin position="458"/>
        <end position="461"/>
    </location>
</feature>
<feature type="strand" evidence="11">
    <location>
        <begin position="467"/>
        <end position="473"/>
    </location>
</feature>
<feature type="helix" evidence="11">
    <location>
        <begin position="489"/>
        <end position="495"/>
    </location>
</feature>
<feature type="strand" evidence="11">
    <location>
        <begin position="501"/>
        <end position="506"/>
    </location>
</feature>
<feature type="strand" evidence="15">
    <location>
        <begin position="510"/>
        <end position="513"/>
    </location>
</feature>
<feature type="strand" evidence="11">
    <location>
        <begin position="516"/>
        <end position="518"/>
    </location>
</feature>
<feature type="strand" evidence="15">
    <location>
        <begin position="520"/>
        <end position="522"/>
    </location>
</feature>
<feature type="strand" evidence="11">
    <location>
        <begin position="527"/>
        <end position="533"/>
    </location>
</feature>
<feature type="helix" evidence="11">
    <location>
        <begin position="536"/>
        <end position="541"/>
    </location>
</feature>
<feature type="strand" evidence="12">
    <location>
        <begin position="543"/>
        <end position="545"/>
    </location>
</feature>
<feature type="strand" evidence="11">
    <location>
        <begin position="551"/>
        <end position="554"/>
    </location>
</feature>
<feature type="helix" evidence="11">
    <location>
        <begin position="558"/>
        <end position="560"/>
    </location>
</feature>
<feature type="turn" evidence="11">
    <location>
        <begin position="568"/>
        <end position="572"/>
    </location>
</feature>
<feature type="strand" evidence="11">
    <location>
        <begin position="574"/>
        <end position="578"/>
    </location>
</feature>
<feature type="turn" evidence="11">
    <location>
        <begin position="580"/>
        <end position="582"/>
    </location>
</feature>
<feature type="strand" evidence="11">
    <location>
        <begin position="585"/>
        <end position="591"/>
    </location>
</feature>
<feature type="strand" evidence="11">
    <location>
        <begin position="595"/>
        <end position="598"/>
    </location>
</feature>
<feature type="strand" evidence="11">
    <location>
        <begin position="604"/>
        <end position="608"/>
    </location>
</feature>
<feature type="turn" evidence="11">
    <location>
        <begin position="609"/>
        <end position="612"/>
    </location>
</feature>
<feature type="helix" evidence="11">
    <location>
        <begin position="613"/>
        <end position="621"/>
    </location>
</feature>
<evidence type="ECO:0000250" key="1"/>
<evidence type="ECO:0000250" key="2">
    <source>
        <dbReference type="UniProtKB" id="P00734"/>
    </source>
</evidence>
<evidence type="ECO:0000255" key="3"/>
<evidence type="ECO:0000255" key="4">
    <source>
        <dbReference type="PROSITE-ProRule" id="PRU00121"/>
    </source>
</evidence>
<evidence type="ECO:0000255" key="5">
    <source>
        <dbReference type="PROSITE-ProRule" id="PRU00274"/>
    </source>
</evidence>
<evidence type="ECO:0000255" key="6">
    <source>
        <dbReference type="PROSITE-ProRule" id="PRU00463"/>
    </source>
</evidence>
<evidence type="ECO:0000269" key="7">
    <source>
    </source>
</evidence>
<evidence type="ECO:0000269" key="8">
    <source ref="4"/>
</evidence>
<evidence type="ECO:0000305" key="9"/>
<evidence type="ECO:0007829" key="10">
    <source>
        <dbReference type="PDB" id="1A0H"/>
    </source>
</evidence>
<evidence type="ECO:0007829" key="11">
    <source>
        <dbReference type="PDB" id="1ETR"/>
    </source>
</evidence>
<evidence type="ECO:0007829" key="12">
    <source>
        <dbReference type="PDB" id="1ETT"/>
    </source>
</evidence>
<evidence type="ECO:0007829" key="13">
    <source>
        <dbReference type="PDB" id="1MKX"/>
    </source>
</evidence>
<evidence type="ECO:0007829" key="14">
    <source>
        <dbReference type="PDB" id="1NL1"/>
    </source>
</evidence>
<evidence type="ECO:0007829" key="15">
    <source>
        <dbReference type="PDB" id="1UCY"/>
    </source>
</evidence>
<evidence type="ECO:0007829" key="16">
    <source>
        <dbReference type="PDB" id="2A1D"/>
    </source>
</evidence>
<evidence type="ECO:0007829" key="17">
    <source>
        <dbReference type="PDB" id="2HPP"/>
    </source>
</evidence>
<evidence type="ECO:0007829" key="18">
    <source>
        <dbReference type="PDB" id="2ODY"/>
    </source>
</evidence>
<evidence type="ECO:0007829" key="19">
    <source>
        <dbReference type="PDB" id="2PF1"/>
    </source>
</evidence>
<evidence type="ECO:0007829" key="20">
    <source>
        <dbReference type="PDB" id="2PF2"/>
    </source>
</evidence>
<keyword id="KW-0002">3D-structure</keyword>
<keyword id="KW-0011">Acute phase</keyword>
<keyword id="KW-0094">Blood coagulation</keyword>
<keyword id="KW-0106">Calcium</keyword>
<keyword id="KW-0165">Cleavage on pair of basic residues</keyword>
<keyword id="KW-0903">Direct protein sequencing</keyword>
<keyword id="KW-1015">Disulfide bond</keyword>
<keyword id="KW-0301">Gamma-carboxyglutamic acid</keyword>
<keyword id="KW-0325">Glycoprotein</keyword>
<keyword id="KW-0356">Hemostasis</keyword>
<keyword id="KW-0378">Hydrolase</keyword>
<keyword id="KW-0420">Kringle</keyword>
<keyword id="KW-0645">Protease</keyword>
<keyword id="KW-1185">Reference proteome</keyword>
<keyword id="KW-0677">Repeat</keyword>
<keyword id="KW-0964">Secreted</keyword>
<keyword id="KW-0720">Serine protease</keyword>
<keyword id="KW-0732">Signal</keyword>
<keyword id="KW-0865">Zymogen</keyword>